<protein>
    <recommendedName>
        <fullName>Mannitol 2-dehydrogenase</fullName>
        <shortName>M2DH</shortName>
        <shortName>MDH</shortName>
        <ecNumber>1.1.1.67</ecNumber>
    </recommendedName>
</protein>
<gene>
    <name type="ORF">SNOG_09898</name>
</gene>
<accession>Q0UEB6</accession>
<reference key="1">
    <citation type="journal article" date="2007" name="Plant Cell">
        <title>Dothideomycete-plant interactions illuminated by genome sequencing and EST analysis of the wheat pathogen Stagonospora nodorum.</title>
        <authorList>
            <person name="Hane J.K."/>
            <person name="Lowe R.G.T."/>
            <person name="Solomon P.S."/>
            <person name="Tan K.-C."/>
            <person name="Schoch C.L."/>
            <person name="Spatafora J.W."/>
            <person name="Crous P.W."/>
            <person name="Kodira C.D."/>
            <person name="Birren B.W."/>
            <person name="Galagan J.E."/>
            <person name="Torriani S.F.F."/>
            <person name="McDonald B.A."/>
            <person name="Oliver R.P."/>
        </authorList>
    </citation>
    <scope>NUCLEOTIDE SEQUENCE [LARGE SCALE GENOMIC DNA]</scope>
    <source>
        <strain>SN15 / ATCC MYA-4574 / FGSC 10173</strain>
    </source>
</reference>
<keyword id="KW-0520">NAD</keyword>
<keyword id="KW-0560">Oxidoreductase</keyword>
<name>M2DH_PHANO</name>
<feature type="chain" id="PRO_0000371547" description="Mannitol 2-dehydrogenase">
    <location>
        <begin position="1"/>
        <end position="568"/>
    </location>
</feature>
<feature type="binding site" evidence="1">
    <location>
        <begin position="109"/>
        <end position="120"/>
    </location>
    <ligand>
        <name>NAD(+)</name>
        <dbReference type="ChEBI" id="CHEBI:57540"/>
    </ligand>
</feature>
<evidence type="ECO:0000250" key="1"/>
<evidence type="ECO:0000305" key="2"/>
<sequence>MFSYLPRYPLRAASARALVRATRPSYRSALLRYQSSEAVGRTQEIVPGAYQIPPRDFSRQHEEKLAPKNAARAPRRIEPATLKLNSKNLSQLQNVTVPTYQREGVKQGIVHVGVGGFHRAHLAAYVDTLLEQFNSQDWSICGVDLQPFAAPMRDALGSQDNLYTMIECDTEGTSARVIGSITDYLFAPDNCEAVIAKMAHPDTHIVSMTVTESGYYMNENTHELQIDHPDIAADLAGQQPPRTVFAYLYAALARRHAAGLRPFTVMSCDNMQKNGDISRNMLLAFARQQNPEVADWIAENGAFPNSMVDRITPRTSDENKAQLAQEFGVEDSWPVVTEVFHQWVLEDKFADGRPPFEKAGVQVVPNVHKVEEYELIKLRLLNASHSAMGYAGYLGGFTYIHEVIADPTFRKYIRNMMQEEVQPLLPRIPGVSVDDYCNTLLGRFSNPTLKDELPRICLGGSGKIPQFIMPSIAEQIQAGGPLRRLTLCAAAWFRYLRGINEQGQAFKLDDPMAEELQAKALESPFSVLEVKSLFGDDLRDDKRFVAELKNALESLERDGARATIAQYA</sequence>
<organism>
    <name type="scientific">Phaeosphaeria nodorum (strain SN15 / ATCC MYA-4574 / FGSC 10173)</name>
    <name type="common">Glume blotch fungus</name>
    <name type="synonym">Parastagonospora nodorum</name>
    <dbReference type="NCBI Taxonomy" id="321614"/>
    <lineage>
        <taxon>Eukaryota</taxon>
        <taxon>Fungi</taxon>
        <taxon>Dikarya</taxon>
        <taxon>Ascomycota</taxon>
        <taxon>Pezizomycotina</taxon>
        <taxon>Dothideomycetes</taxon>
        <taxon>Pleosporomycetidae</taxon>
        <taxon>Pleosporales</taxon>
        <taxon>Pleosporineae</taxon>
        <taxon>Phaeosphaeriaceae</taxon>
        <taxon>Parastagonospora</taxon>
    </lineage>
</organism>
<proteinExistence type="inferred from homology"/>
<comment type="function">
    <text evidence="1">Catalyzes the NAD(H)-dependent interconversion of D-fructose and D-mannitol in the mannitol metabolic pathway.</text>
</comment>
<comment type="catalytic activity">
    <reaction>
        <text>D-mannitol + NAD(+) = D-fructose + NADH + H(+)</text>
        <dbReference type="Rhea" id="RHEA:12084"/>
        <dbReference type="ChEBI" id="CHEBI:15378"/>
        <dbReference type="ChEBI" id="CHEBI:16899"/>
        <dbReference type="ChEBI" id="CHEBI:37721"/>
        <dbReference type="ChEBI" id="CHEBI:57540"/>
        <dbReference type="ChEBI" id="CHEBI:57945"/>
        <dbReference type="EC" id="1.1.1.67"/>
    </reaction>
</comment>
<comment type="subunit">
    <text evidence="1">Monomer.</text>
</comment>
<comment type="similarity">
    <text evidence="2">Belongs to the mannitol dehydrogenase family.</text>
</comment>
<dbReference type="EC" id="1.1.1.67"/>
<dbReference type="EMBL" id="CH445339">
    <property type="protein sequence ID" value="EAT83163.1"/>
    <property type="molecule type" value="Genomic_DNA"/>
</dbReference>
<dbReference type="RefSeq" id="XP_001800184.1">
    <property type="nucleotide sequence ID" value="XM_001800132.1"/>
</dbReference>
<dbReference type="SMR" id="Q0UEB6"/>
<dbReference type="FunCoup" id="Q0UEB6">
    <property type="interactions" value="45"/>
</dbReference>
<dbReference type="STRING" id="321614.Q0UEB6"/>
<dbReference type="EnsemblFungi" id="SNOT_09898">
    <property type="protein sequence ID" value="SNOT_09898"/>
    <property type="gene ID" value="SNOG_09898"/>
</dbReference>
<dbReference type="GeneID" id="5977089"/>
<dbReference type="KEGG" id="pno:SNOG_09898"/>
<dbReference type="VEuPathDB" id="FungiDB:JI435_098980"/>
<dbReference type="eggNOG" id="ENOG502QT30">
    <property type="taxonomic scope" value="Eukaryota"/>
</dbReference>
<dbReference type="HOGENOM" id="CLU_027324_0_1_1"/>
<dbReference type="InParanoid" id="Q0UEB6"/>
<dbReference type="OMA" id="IVASWAR"/>
<dbReference type="OrthoDB" id="418169at2759"/>
<dbReference type="Proteomes" id="UP000001055">
    <property type="component" value="Unassembled WGS sequence"/>
</dbReference>
<dbReference type="GO" id="GO:0050086">
    <property type="term" value="F:mannitol 2-dehydrogenase activity"/>
    <property type="evidence" value="ECO:0007669"/>
    <property type="project" value="UniProtKB-EC"/>
</dbReference>
<dbReference type="GO" id="GO:0046029">
    <property type="term" value="F:mannitol dehydrogenase activity"/>
    <property type="evidence" value="ECO:0000318"/>
    <property type="project" value="GO_Central"/>
</dbReference>
<dbReference type="FunFam" id="3.40.50.720:FF:000129">
    <property type="entry name" value="D-mannonate oxidoreductase"/>
    <property type="match status" value="1"/>
</dbReference>
<dbReference type="Gene3D" id="1.10.1040.10">
    <property type="entry name" value="N-(1-d-carboxylethyl)-l-norvaline Dehydrogenase, domain 2"/>
    <property type="match status" value="1"/>
</dbReference>
<dbReference type="Gene3D" id="3.40.50.720">
    <property type="entry name" value="NAD(P)-binding Rossmann-like Domain"/>
    <property type="match status" value="1"/>
</dbReference>
<dbReference type="InterPro" id="IPR008927">
    <property type="entry name" value="6-PGluconate_DH-like_C_sf"/>
</dbReference>
<dbReference type="InterPro" id="IPR013328">
    <property type="entry name" value="6PGD_dom2"/>
</dbReference>
<dbReference type="InterPro" id="IPR000669">
    <property type="entry name" value="Mannitol_DH"/>
</dbReference>
<dbReference type="InterPro" id="IPR050988">
    <property type="entry name" value="Mannitol_DH/Oxidoreductase"/>
</dbReference>
<dbReference type="InterPro" id="IPR013118">
    <property type="entry name" value="Mannitol_DH_C"/>
</dbReference>
<dbReference type="InterPro" id="IPR013131">
    <property type="entry name" value="Mannitol_DH_N"/>
</dbReference>
<dbReference type="InterPro" id="IPR036291">
    <property type="entry name" value="NAD(P)-bd_dom_sf"/>
</dbReference>
<dbReference type="PANTHER" id="PTHR43362:SF1">
    <property type="entry name" value="MANNITOL DEHYDROGENASE 2-RELATED"/>
    <property type="match status" value="1"/>
</dbReference>
<dbReference type="PANTHER" id="PTHR43362">
    <property type="entry name" value="MANNITOL DEHYDROGENASE DSF1-RELATED"/>
    <property type="match status" value="1"/>
</dbReference>
<dbReference type="Pfam" id="PF01232">
    <property type="entry name" value="Mannitol_dh"/>
    <property type="match status" value="1"/>
</dbReference>
<dbReference type="Pfam" id="PF08125">
    <property type="entry name" value="Mannitol_dh_C"/>
    <property type="match status" value="1"/>
</dbReference>
<dbReference type="PRINTS" id="PR00084">
    <property type="entry name" value="MTLDHDRGNASE"/>
</dbReference>
<dbReference type="SUPFAM" id="SSF48179">
    <property type="entry name" value="6-phosphogluconate dehydrogenase C-terminal domain-like"/>
    <property type="match status" value="1"/>
</dbReference>
<dbReference type="SUPFAM" id="SSF51735">
    <property type="entry name" value="NAD(P)-binding Rossmann-fold domains"/>
    <property type="match status" value="1"/>
</dbReference>